<accession>P62783</accession>
<accession>P02306</accession>
<accession>P18678</accession>
<keyword id="KW-0007">Acetylation</keyword>
<keyword id="KW-0158">Chromosome</keyword>
<keyword id="KW-0238">DNA-binding</keyword>
<keyword id="KW-0488">Methylation</keyword>
<keyword id="KW-0544">Nucleosome core</keyword>
<keyword id="KW-0539">Nucleus</keyword>
<keyword id="KW-1185">Reference proteome</keyword>
<evidence type="ECO:0000250" key="1"/>
<evidence type="ECO:0000250" key="2">
    <source>
        <dbReference type="UniProtKB" id="P62805"/>
    </source>
</evidence>
<evidence type="ECO:0000256" key="3">
    <source>
        <dbReference type="SAM" id="MobiDB-lite"/>
    </source>
</evidence>
<evidence type="ECO:0000305" key="4"/>
<proteinExistence type="inferred from homology"/>
<comment type="function">
    <text>Core component of nucleosome. Nucleosomes wrap and compact DNA into chromatin, limiting DNA accessibility to the cellular machineries which require DNA as a template. Histones thereby play a central role in transcription regulation, DNA repair, DNA replication and chromosomal stability. DNA accessibility is regulated via a complex set of post-translational modifications of histones, also called histone code, and nucleosome remodeling.</text>
</comment>
<comment type="subunit">
    <text>The nucleosome is a histone octamer containing two molecules each of H2A, H2B, H3 and H4 assembled in one H3-H4 heterotetramer and two H2A-H2B heterodimers. The octamer wraps approximately 147 bp of DNA.</text>
</comment>
<comment type="subcellular location">
    <subcellularLocation>
        <location evidence="1">Nucleus</location>
    </subcellularLocation>
    <subcellularLocation>
        <location evidence="1">Chromosome</location>
    </subcellularLocation>
</comment>
<comment type="similarity">
    <text evidence="4">Belongs to the histone H4 family.</text>
</comment>
<dbReference type="EMBL" id="X03952">
    <property type="protein sequence ID" value="CAA27581.1"/>
    <property type="molecule type" value="Genomic_DNA"/>
</dbReference>
<dbReference type="EMBL" id="V01355">
    <property type="protein sequence ID" value="CAA24645.1"/>
    <property type="molecule type" value="Genomic_DNA"/>
</dbReference>
<dbReference type="EMBL" id="X06639">
    <property type="protein sequence ID" value="CAA29847.1"/>
    <property type="molecule type" value="Genomic_DNA"/>
</dbReference>
<dbReference type="EMBL" id="X06641">
    <property type="protein sequence ID" value="CAA29849.1"/>
    <property type="molecule type" value="Genomic_DNA"/>
</dbReference>
<dbReference type="EMBL" id="M32426">
    <property type="protein sequence ID" value="AAA30054.1"/>
    <property type="molecule type" value="mRNA"/>
</dbReference>
<dbReference type="PIR" id="A02643">
    <property type="entry name" value="HSUR4P"/>
</dbReference>
<dbReference type="PIR" id="S01618">
    <property type="entry name" value="S01618"/>
</dbReference>
<dbReference type="RefSeq" id="NP_999707.1">
    <property type="nucleotide sequence ID" value="NM_214542.1"/>
</dbReference>
<dbReference type="RefSeq" id="NP_999713.1">
    <property type="nucleotide sequence ID" value="NM_214548.1"/>
</dbReference>
<dbReference type="RefSeq" id="NP_999715.1">
    <property type="nucleotide sequence ID" value="NM_214550.1"/>
</dbReference>
<dbReference type="RefSeq" id="NP_999716.1">
    <property type="nucleotide sequence ID" value="NM_214551.1"/>
</dbReference>
<dbReference type="RefSeq" id="XP_001175485.4">
    <property type="nucleotide sequence ID" value="XM_001175485.4"/>
</dbReference>
<dbReference type="RefSeq" id="XP_001177624.1">
    <property type="nucleotide sequence ID" value="XM_001177624.3"/>
</dbReference>
<dbReference type="RefSeq" id="XP_001178441.3">
    <property type="nucleotide sequence ID" value="XM_001178441.4"/>
</dbReference>
<dbReference type="RefSeq" id="XP_001178934.1">
    <property type="nucleotide sequence ID" value="XM_001178934.4"/>
</dbReference>
<dbReference type="RefSeq" id="XP_011661644.1">
    <property type="nucleotide sequence ID" value="XM_011663342.1"/>
</dbReference>
<dbReference type="RefSeq" id="XP_011663808.1">
    <property type="nucleotide sequence ID" value="XM_011665506.2"/>
</dbReference>
<dbReference type="RefSeq" id="XP_011678157.1">
    <property type="nucleotide sequence ID" value="XM_011679855.1"/>
</dbReference>
<dbReference type="RefSeq" id="XP_011679526.1">
    <property type="nucleotide sequence ID" value="XM_011681224.2"/>
</dbReference>
<dbReference type="RefSeq" id="XP_030837439.1">
    <property type="nucleotide sequence ID" value="XM_030981579.1"/>
</dbReference>
<dbReference type="RefSeq" id="XP_030842686.1">
    <property type="nucleotide sequence ID" value="XM_030986826.1"/>
</dbReference>
<dbReference type="RefSeq" id="XP_030842704.1">
    <property type="nucleotide sequence ID" value="XM_030986844.1"/>
</dbReference>
<dbReference type="RefSeq" id="XP_030843379.1">
    <property type="nucleotide sequence ID" value="XM_030987519.1"/>
</dbReference>
<dbReference type="SMR" id="P62783"/>
<dbReference type="FunCoup" id="P62783">
    <property type="interactions" value="1760"/>
</dbReference>
<dbReference type="STRING" id="7668.P62783"/>
<dbReference type="EnsemblMetazoa" id="NM_214542">
    <property type="protein sequence ID" value="NP_999707"/>
    <property type="gene ID" value="GeneID_373325"/>
</dbReference>
<dbReference type="EnsemblMetazoa" id="NM_214548">
    <property type="protein sequence ID" value="NP_999713"/>
    <property type="gene ID" value="LOC373341"/>
</dbReference>
<dbReference type="EnsemblMetazoa" id="NM_214550">
    <property type="protein sequence ID" value="NP_999715"/>
    <property type="gene ID" value="LOC373343"/>
</dbReference>
<dbReference type="EnsemblMetazoa" id="NM_214551">
    <property type="protein sequence ID" value="NP_999716"/>
    <property type="gene ID" value="LOC373346"/>
</dbReference>
<dbReference type="EnsemblMetazoa" id="XM_001175485">
    <property type="protein sequence ID" value="XP_001175485"/>
    <property type="gene ID" value="LOC752187"/>
</dbReference>
<dbReference type="EnsemblMetazoa" id="XM_001177624">
    <property type="protein sequence ID" value="XP_001177624"/>
    <property type="gene ID" value="LOC753782"/>
</dbReference>
<dbReference type="EnsemblMetazoa" id="XM_001178441">
    <property type="protein sequence ID" value="XP_001178441"/>
    <property type="gene ID" value="LOC754479"/>
</dbReference>
<dbReference type="EnsemblMetazoa" id="XM_001178934">
    <property type="protein sequence ID" value="XP_001178934"/>
    <property type="gene ID" value="LOC753944"/>
</dbReference>
<dbReference type="EnsemblMetazoa" id="XM_011665506">
    <property type="protein sequence ID" value="XP_011663808"/>
    <property type="gene ID" value="LOC753158"/>
</dbReference>
<dbReference type="EnsemblMetazoa" id="XM_011681224">
    <property type="protein sequence ID" value="XP_011679526"/>
    <property type="gene ID" value="LOC754292"/>
</dbReference>
<dbReference type="EnsemblMetazoa" id="XM_030981579">
    <property type="protein sequence ID" value="XP_030837439"/>
    <property type="gene ID" value="LOC115922556"/>
</dbReference>
<dbReference type="EnsemblMetazoa" id="XM_030986826">
    <property type="protein sequence ID" value="XP_030842686"/>
    <property type="gene ID" value="LOC115924509"/>
</dbReference>
<dbReference type="EnsemblMetazoa" id="XM_030986844">
    <property type="protein sequence ID" value="XP_030842704"/>
    <property type="gene ID" value="LOC576388"/>
</dbReference>
<dbReference type="EnsemblMetazoa" id="XM_030987519">
    <property type="protein sequence ID" value="XP_030843379"/>
    <property type="gene ID" value="LOC115924735"/>
</dbReference>
<dbReference type="GeneID" id="115922556"/>
<dbReference type="GeneID" id="115924509"/>
<dbReference type="GeneID" id="115924735"/>
<dbReference type="GeneID" id="373325"/>
<dbReference type="GeneID" id="373341"/>
<dbReference type="GeneID" id="373343"/>
<dbReference type="GeneID" id="373346"/>
<dbReference type="GeneID" id="576388"/>
<dbReference type="GeneID" id="752187"/>
<dbReference type="GeneID" id="753158"/>
<dbReference type="GeneID" id="753782"/>
<dbReference type="GeneID" id="753944"/>
<dbReference type="GeneID" id="754292"/>
<dbReference type="GeneID" id="754479"/>
<dbReference type="KEGG" id="spu:373325"/>
<dbReference type="KEGG" id="spu:373341"/>
<dbReference type="KEGG" id="spu:373343"/>
<dbReference type="KEGG" id="spu:373346"/>
<dbReference type="KEGG" id="spu:752187"/>
<dbReference type="KEGG" id="spu:753158"/>
<dbReference type="KEGG" id="spu:753782"/>
<dbReference type="KEGG" id="spu:753944"/>
<dbReference type="KEGG" id="spu:754292"/>
<dbReference type="KEGG" id="spu:754479"/>
<dbReference type="CTD" id="373325"/>
<dbReference type="eggNOG" id="KOG3467">
    <property type="taxonomic scope" value="Eukaryota"/>
</dbReference>
<dbReference type="HOGENOM" id="CLU_109117_2_3_1"/>
<dbReference type="InParanoid" id="P62783"/>
<dbReference type="OMA" id="FRTTIQI"/>
<dbReference type="OrthoDB" id="9929128at2759"/>
<dbReference type="PhylomeDB" id="P62783"/>
<dbReference type="Proteomes" id="UP000007110">
    <property type="component" value="Unassembled WGS sequence"/>
</dbReference>
<dbReference type="GO" id="GO:0000786">
    <property type="term" value="C:nucleosome"/>
    <property type="evidence" value="ECO:0007669"/>
    <property type="project" value="UniProtKB-KW"/>
</dbReference>
<dbReference type="GO" id="GO:0005634">
    <property type="term" value="C:nucleus"/>
    <property type="evidence" value="ECO:0007669"/>
    <property type="project" value="UniProtKB-SubCell"/>
</dbReference>
<dbReference type="GO" id="GO:0003677">
    <property type="term" value="F:DNA binding"/>
    <property type="evidence" value="ECO:0000318"/>
    <property type="project" value="GO_Central"/>
</dbReference>
<dbReference type="GO" id="GO:0046982">
    <property type="term" value="F:protein heterodimerization activity"/>
    <property type="evidence" value="ECO:0007669"/>
    <property type="project" value="InterPro"/>
</dbReference>
<dbReference type="GO" id="GO:0030527">
    <property type="term" value="F:structural constituent of chromatin"/>
    <property type="evidence" value="ECO:0007669"/>
    <property type="project" value="InterPro"/>
</dbReference>
<dbReference type="GO" id="GO:0006334">
    <property type="term" value="P:nucleosome assembly"/>
    <property type="evidence" value="ECO:0000318"/>
    <property type="project" value="GO_Central"/>
</dbReference>
<dbReference type="CDD" id="cd22912">
    <property type="entry name" value="HFD_H4"/>
    <property type="match status" value="1"/>
</dbReference>
<dbReference type="FunFam" id="1.10.20.10:FF:000002">
    <property type="entry name" value="Histone H4"/>
    <property type="match status" value="1"/>
</dbReference>
<dbReference type="Gene3D" id="1.10.20.10">
    <property type="entry name" value="Histone, subunit A"/>
    <property type="match status" value="1"/>
</dbReference>
<dbReference type="InterPro" id="IPR035425">
    <property type="entry name" value="CENP-T/H4_C"/>
</dbReference>
<dbReference type="InterPro" id="IPR009072">
    <property type="entry name" value="Histone-fold"/>
</dbReference>
<dbReference type="InterPro" id="IPR001951">
    <property type="entry name" value="Histone_H4"/>
</dbReference>
<dbReference type="InterPro" id="IPR019809">
    <property type="entry name" value="Histone_H4_CS"/>
</dbReference>
<dbReference type="PANTHER" id="PTHR10484">
    <property type="entry name" value="HISTONE H4"/>
    <property type="match status" value="1"/>
</dbReference>
<dbReference type="Pfam" id="PF15511">
    <property type="entry name" value="CENP-T_C"/>
    <property type="match status" value="1"/>
</dbReference>
<dbReference type="PRINTS" id="PR00623">
    <property type="entry name" value="HISTONEH4"/>
</dbReference>
<dbReference type="SMART" id="SM00417">
    <property type="entry name" value="H4"/>
    <property type="match status" value="1"/>
</dbReference>
<dbReference type="SUPFAM" id="SSF47113">
    <property type="entry name" value="Histone-fold"/>
    <property type="match status" value="1"/>
</dbReference>
<dbReference type="PROSITE" id="PS00047">
    <property type="entry name" value="HISTONE_H4"/>
    <property type="match status" value="1"/>
</dbReference>
<name>H4_STRPU</name>
<sequence length="103" mass="11369">MSGRGKGGKGLGKGGAKRHRKVLRDNIQGITKPAIRRLARRGGVKRISGLIYEETRGVLKVFLENVIRDAVTYCEHAKRKTVTAMDVVYALKRQGRTLYGFGG</sequence>
<protein>
    <recommendedName>
        <fullName>Histone H4</fullName>
    </recommendedName>
</protein>
<organism>
    <name type="scientific">Strongylocentrotus purpuratus</name>
    <name type="common">Purple sea urchin</name>
    <dbReference type="NCBI Taxonomy" id="7668"/>
    <lineage>
        <taxon>Eukaryota</taxon>
        <taxon>Metazoa</taxon>
        <taxon>Echinodermata</taxon>
        <taxon>Eleutherozoa</taxon>
        <taxon>Echinozoa</taxon>
        <taxon>Echinoidea</taxon>
        <taxon>Euechinoidea</taxon>
        <taxon>Echinacea</taxon>
        <taxon>Camarodonta</taxon>
        <taxon>Echinidea</taxon>
        <taxon>Strongylocentrotidae</taxon>
        <taxon>Strongylocentrotus</taxon>
    </lineage>
</organism>
<feature type="initiator methionine" description="Removed" evidence="1">
    <location>
        <position position="1"/>
    </location>
</feature>
<feature type="chain" id="PRO_0000158362" description="Histone H4">
    <location>
        <begin position="2"/>
        <end position="103"/>
    </location>
</feature>
<feature type="DNA-binding region">
    <location>
        <begin position="17"/>
        <end position="21"/>
    </location>
</feature>
<feature type="region of interest" description="Disordered" evidence="3">
    <location>
        <begin position="1"/>
        <end position="20"/>
    </location>
</feature>
<feature type="compositionally biased region" description="Gly residues" evidence="3">
    <location>
        <begin position="1"/>
        <end position="14"/>
    </location>
</feature>
<feature type="modified residue" description="N-acetylserine" evidence="1">
    <location>
        <position position="2"/>
    </location>
</feature>
<feature type="modified residue" description="N6-acetyl-N6-methyllysine; alternate" evidence="2">
    <location>
        <position position="6"/>
    </location>
</feature>
<feature type="modified residue" description="N6-acetyl-N6-methyllysine; alternate" evidence="2">
    <location>
        <position position="13"/>
    </location>
</feature>
<feature type="modified residue" description="N6-acetyllysine" evidence="1">
    <location>
        <position position="17"/>
    </location>
</feature>
<feature type="modified residue" description="N6-methyllysine" evidence="1">
    <location>
        <position position="21"/>
    </location>
</feature>
<reference key="1">
    <citation type="journal article" date="1987" name="Nucleic Acids Res.">
        <title>Evolution of late H2A, H2B, and H4 histone genes of the sea urchin, Strongylocentrotus purpuratus.</title>
        <authorList>
            <person name="Maxson R."/>
            <person name="Mohun T."/>
            <person name="Gormezano G."/>
            <person name="Kedes L."/>
        </authorList>
    </citation>
    <scope>NUCLEOTIDE SEQUENCE [GENOMIC DNA]</scope>
</reference>
<reference key="2">
    <citation type="journal article" date="1986" name="Nucleic Acids Res.">
        <title>Sequence, organization and expression of late embryonic H3 and H4 histone genes from the sea urchin, Strongylocentrotus purpuratus.</title>
        <authorList>
            <person name="Kaumeyer J.F."/>
            <person name="Weinberg E.S."/>
        </authorList>
    </citation>
    <scope>NUCLEOTIDE SEQUENCE [GENOMIC DNA]</scope>
</reference>
<reference key="3">
    <citation type="journal article" date="1981" name="Biochemistry">
        <title>Comparison of the early histone H4 gene sequence of Strongylocentrotus purpuratus with maternal, early, and late histone H4 mRNA sequences.</title>
        <authorList>
            <person name="Grunstein M."/>
            <person name="Diamond K.E."/>
            <person name="Knoppel E."/>
            <person name="Grunstein J.E."/>
        </authorList>
    </citation>
    <scope>NUCLEOTIDE SEQUENCE</scope>
</reference>
<reference key="4">
    <citation type="journal article" date="1984" name="J. Mol. Evol.">
        <title>Evolving sea urchin histone genes -- nucleotide polymorphisms in the H4 gene and spacers of Strongylocentrotus purpuratus.</title>
        <authorList>
            <person name="Yager L.N."/>
            <person name="Kaumeyer J.F."/>
            <person name="Weinberg E.S."/>
        </authorList>
    </citation>
    <scope>NUCLEOTIDE SEQUENCE</scope>
</reference>